<name>RL22_YERPG</name>
<protein>
    <recommendedName>
        <fullName evidence="1">Large ribosomal subunit protein uL22</fullName>
    </recommendedName>
    <alternativeName>
        <fullName evidence="2">50S ribosomal protein L22</fullName>
    </alternativeName>
</protein>
<proteinExistence type="inferred from homology"/>
<gene>
    <name evidence="1" type="primary">rplV</name>
    <name type="ordered locus">YpAngola_A0589</name>
</gene>
<sequence length="110" mass="12186">METIAKHRHARSSAQKVRLVADLIRGKKVSQALETLTYTNKKAAGLVKKVLESAIANAEHNDGADIDDLKVTKIFVDEGPSMKRIMPRAKGRADRILKRTSHITVVVSDR</sequence>
<organism>
    <name type="scientific">Yersinia pestis bv. Antiqua (strain Angola)</name>
    <dbReference type="NCBI Taxonomy" id="349746"/>
    <lineage>
        <taxon>Bacteria</taxon>
        <taxon>Pseudomonadati</taxon>
        <taxon>Pseudomonadota</taxon>
        <taxon>Gammaproteobacteria</taxon>
        <taxon>Enterobacterales</taxon>
        <taxon>Yersiniaceae</taxon>
        <taxon>Yersinia</taxon>
    </lineage>
</organism>
<comment type="function">
    <text evidence="1">This protein binds specifically to 23S rRNA; its binding is stimulated by other ribosomal proteins, e.g. L4, L17, and L20. It is important during the early stages of 50S assembly. It makes multiple contacts with different domains of the 23S rRNA in the assembled 50S subunit and ribosome (By similarity).</text>
</comment>
<comment type="function">
    <text evidence="1">The globular domain of the protein is located near the polypeptide exit tunnel on the outside of the subunit, while an extended beta-hairpin is found that lines the wall of the exit tunnel in the center of the 70S ribosome.</text>
</comment>
<comment type="subunit">
    <text evidence="1">Part of the 50S ribosomal subunit.</text>
</comment>
<comment type="similarity">
    <text evidence="1">Belongs to the universal ribosomal protein uL22 family.</text>
</comment>
<feature type="chain" id="PRO_1000142332" description="Large ribosomal subunit protein uL22">
    <location>
        <begin position="1"/>
        <end position="110"/>
    </location>
</feature>
<dbReference type="EMBL" id="CP000901">
    <property type="protein sequence ID" value="ABX86285.1"/>
    <property type="molecule type" value="Genomic_DNA"/>
</dbReference>
<dbReference type="RefSeq" id="WP_002223844.1">
    <property type="nucleotide sequence ID" value="NZ_CP009935.1"/>
</dbReference>
<dbReference type="SMR" id="A9R901"/>
<dbReference type="GeneID" id="98190601"/>
<dbReference type="KEGG" id="ypg:YpAngola_A0589"/>
<dbReference type="PATRIC" id="fig|349746.12.peg.1538"/>
<dbReference type="GO" id="GO:0022625">
    <property type="term" value="C:cytosolic large ribosomal subunit"/>
    <property type="evidence" value="ECO:0007669"/>
    <property type="project" value="TreeGrafter"/>
</dbReference>
<dbReference type="GO" id="GO:0019843">
    <property type="term" value="F:rRNA binding"/>
    <property type="evidence" value="ECO:0007669"/>
    <property type="project" value="UniProtKB-UniRule"/>
</dbReference>
<dbReference type="GO" id="GO:0003735">
    <property type="term" value="F:structural constituent of ribosome"/>
    <property type="evidence" value="ECO:0007669"/>
    <property type="project" value="InterPro"/>
</dbReference>
<dbReference type="GO" id="GO:0006412">
    <property type="term" value="P:translation"/>
    <property type="evidence" value="ECO:0007669"/>
    <property type="project" value="UniProtKB-UniRule"/>
</dbReference>
<dbReference type="CDD" id="cd00336">
    <property type="entry name" value="Ribosomal_L22"/>
    <property type="match status" value="1"/>
</dbReference>
<dbReference type="FunFam" id="3.90.470.10:FF:000001">
    <property type="entry name" value="50S ribosomal protein L22"/>
    <property type="match status" value="1"/>
</dbReference>
<dbReference type="Gene3D" id="3.90.470.10">
    <property type="entry name" value="Ribosomal protein L22/L17"/>
    <property type="match status" value="1"/>
</dbReference>
<dbReference type="HAMAP" id="MF_01331_B">
    <property type="entry name" value="Ribosomal_uL22_B"/>
    <property type="match status" value="1"/>
</dbReference>
<dbReference type="InterPro" id="IPR001063">
    <property type="entry name" value="Ribosomal_uL22"/>
</dbReference>
<dbReference type="InterPro" id="IPR005727">
    <property type="entry name" value="Ribosomal_uL22_bac/chlpt-type"/>
</dbReference>
<dbReference type="InterPro" id="IPR047867">
    <property type="entry name" value="Ribosomal_uL22_bac/org-type"/>
</dbReference>
<dbReference type="InterPro" id="IPR018260">
    <property type="entry name" value="Ribosomal_uL22_CS"/>
</dbReference>
<dbReference type="InterPro" id="IPR036394">
    <property type="entry name" value="Ribosomal_uL22_sf"/>
</dbReference>
<dbReference type="NCBIfam" id="TIGR01044">
    <property type="entry name" value="rplV_bact"/>
    <property type="match status" value="1"/>
</dbReference>
<dbReference type="PANTHER" id="PTHR13501">
    <property type="entry name" value="CHLOROPLAST 50S RIBOSOMAL PROTEIN L22-RELATED"/>
    <property type="match status" value="1"/>
</dbReference>
<dbReference type="PANTHER" id="PTHR13501:SF8">
    <property type="entry name" value="LARGE RIBOSOMAL SUBUNIT PROTEIN UL22M"/>
    <property type="match status" value="1"/>
</dbReference>
<dbReference type="Pfam" id="PF00237">
    <property type="entry name" value="Ribosomal_L22"/>
    <property type="match status" value="1"/>
</dbReference>
<dbReference type="SUPFAM" id="SSF54843">
    <property type="entry name" value="Ribosomal protein L22"/>
    <property type="match status" value="1"/>
</dbReference>
<dbReference type="PROSITE" id="PS00464">
    <property type="entry name" value="RIBOSOMAL_L22"/>
    <property type="match status" value="1"/>
</dbReference>
<reference key="1">
    <citation type="journal article" date="2010" name="J. Bacteriol.">
        <title>Genome sequence of the deep-rooted Yersinia pestis strain Angola reveals new insights into the evolution and pangenome of the plague bacterium.</title>
        <authorList>
            <person name="Eppinger M."/>
            <person name="Worsham P.L."/>
            <person name="Nikolich M.P."/>
            <person name="Riley D.R."/>
            <person name="Sebastian Y."/>
            <person name="Mou S."/>
            <person name="Achtman M."/>
            <person name="Lindler L.E."/>
            <person name="Ravel J."/>
        </authorList>
    </citation>
    <scope>NUCLEOTIDE SEQUENCE [LARGE SCALE GENOMIC DNA]</scope>
    <source>
        <strain>Angola</strain>
    </source>
</reference>
<evidence type="ECO:0000255" key="1">
    <source>
        <dbReference type="HAMAP-Rule" id="MF_01331"/>
    </source>
</evidence>
<evidence type="ECO:0000305" key="2"/>
<keyword id="KW-0687">Ribonucleoprotein</keyword>
<keyword id="KW-0689">Ribosomal protein</keyword>
<keyword id="KW-0694">RNA-binding</keyword>
<keyword id="KW-0699">rRNA-binding</keyword>
<accession>A9R901</accession>